<name>PPID_NEUCR</name>
<accession>Q9P3X9</accession>
<gene>
    <name type="primary">cyp41</name>
    <name type="ORF">NCU03853</name>
</gene>
<dbReference type="EC" id="5.2.1.8"/>
<dbReference type="EMBL" id="AJ292563">
    <property type="protein sequence ID" value="CAC00484.1"/>
    <property type="molecule type" value="mRNA"/>
</dbReference>
<dbReference type="EMBL" id="CM002241">
    <property type="protein sequence ID" value="EAA26627.1"/>
    <property type="molecule type" value="Genomic_DNA"/>
</dbReference>
<dbReference type="RefSeq" id="XP_955863.1">
    <property type="nucleotide sequence ID" value="XM_950770.2"/>
</dbReference>
<dbReference type="SMR" id="Q9P3X9"/>
<dbReference type="FunCoup" id="Q9P3X9">
    <property type="interactions" value="1047"/>
</dbReference>
<dbReference type="STRING" id="367110.Q9P3X9"/>
<dbReference type="PaxDb" id="5141-EFNCRP00000003630"/>
<dbReference type="EnsemblFungi" id="EAA26627">
    <property type="protein sequence ID" value="EAA26627"/>
    <property type="gene ID" value="NCU03853"/>
</dbReference>
<dbReference type="GeneID" id="3872010"/>
<dbReference type="KEGG" id="ncr:NCU03853"/>
<dbReference type="VEuPathDB" id="FungiDB:NCU03853"/>
<dbReference type="HOGENOM" id="CLU_012062_37_0_1"/>
<dbReference type="InParanoid" id="Q9P3X9"/>
<dbReference type="OMA" id="EMEQNCN"/>
<dbReference type="OrthoDB" id="193499at2759"/>
<dbReference type="Proteomes" id="UP000001805">
    <property type="component" value="Chromosome 5, Linkage Group VI"/>
</dbReference>
<dbReference type="GO" id="GO:0005737">
    <property type="term" value="C:cytoplasm"/>
    <property type="evidence" value="ECO:0000318"/>
    <property type="project" value="GO_Central"/>
</dbReference>
<dbReference type="GO" id="GO:0043231">
    <property type="term" value="C:intracellular membrane-bounded organelle"/>
    <property type="evidence" value="ECO:0000318"/>
    <property type="project" value="GO_Central"/>
</dbReference>
<dbReference type="GO" id="GO:0016018">
    <property type="term" value="F:cyclosporin A binding"/>
    <property type="evidence" value="ECO:0000318"/>
    <property type="project" value="GO_Central"/>
</dbReference>
<dbReference type="GO" id="GO:0003755">
    <property type="term" value="F:peptidyl-prolyl cis-trans isomerase activity"/>
    <property type="evidence" value="ECO:0000318"/>
    <property type="project" value="GO_Central"/>
</dbReference>
<dbReference type="GO" id="GO:0043022">
    <property type="term" value="F:ribosome binding"/>
    <property type="evidence" value="ECO:0007669"/>
    <property type="project" value="EnsemblFungi"/>
</dbReference>
<dbReference type="GO" id="GO:0051082">
    <property type="term" value="F:unfolded protein binding"/>
    <property type="evidence" value="ECO:0007669"/>
    <property type="project" value="EnsemblFungi"/>
</dbReference>
<dbReference type="GO" id="GO:0006457">
    <property type="term" value="P:protein folding"/>
    <property type="evidence" value="ECO:0000318"/>
    <property type="project" value="GO_Central"/>
</dbReference>
<dbReference type="GO" id="GO:0042026">
    <property type="term" value="P:protein refolding"/>
    <property type="evidence" value="ECO:0007669"/>
    <property type="project" value="EnsemblFungi"/>
</dbReference>
<dbReference type="CDD" id="cd01926">
    <property type="entry name" value="cyclophilin_ABH_like"/>
    <property type="match status" value="1"/>
</dbReference>
<dbReference type="FunFam" id="2.40.100.10:FF:000009">
    <property type="entry name" value="Peptidyl-prolyl cis-trans isomerase D"/>
    <property type="match status" value="1"/>
</dbReference>
<dbReference type="FunFam" id="1.25.40.10:FF:000029">
    <property type="entry name" value="peptidyl-prolyl cis-trans isomerase D"/>
    <property type="match status" value="1"/>
</dbReference>
<dbReference type="Gene3D" id="2.40.100.10">
    <property type="entry name" value="Cyclophilin-like"/>
    <property type="match status" value="1"/>
</dbReference>
<dbReference type="Gene3D" id="1.25.40.10">
    <property type="entry name" value="Tetratricopeptide repeat domain"/>
    <property type="match status" value="1"/>
</dbReference>
<dbReference type="InterPro" id="IPR029000">
    <property type="entry name" value="Cyclophilin-like_dom_sf"/>
</dbReference>
<dbReference type="InterPro" id="IPR020892">
    <property type="entry name" value="Cyclophilin-type_PPIase_CS"/>
</dbReference>
<dbReference type="InterPro" id="IPR002130">
    <property type="entry name" value="Cyclophilin-type_PPIase_dom"/>
</dbReference>
<dbReference type="InterPro" id="IPR011990">
    <property type="entry name" value="TPR-like_helical_dom_sf"/>
</dbReference>
<dbReference type="InterPro" id="IPR019734">
    <property type="entry name" value="TPR_rpt"/>
</dbReference>
<dbReference type="PANTHER" id="PTHR11071">
    <property type="entry name" value="PEPTIDYL-PROLYL CIS-TRANS ISOMERASE"/>
    <property type="match status" value="1"/>
</dbReference>
<dbReference type="PANTHER" id="PTHR11071:SF561">
    <property type="entry name" value="PEPTIDYL-PROLYL CIS-TRANS ISOMERASE D-RELATED"/>
    <property type="match status" value="1"/>
</dbReference>
<dbReference type="Pfam" id="PF00160">
    <property type="entry name" value="Pro_isomerase"/>
    <property type="match status" value="1"/>
</dbReference>
<dbReference type="PRINTS" id="PR00153">
    <property type="entry name" value="CSAPPISMRASE"/>
</dbReference>
<dbReference type="SMART" id="SM00028">
    <property type="entry name" value="TPR"/>
    <property type="match status" value="2"/>
</dbReference>
<dbReference type="SUPFAM" id="SSF50891">
    <property type="entry name" value="Cyclophilin-like"/>
    <property type="match status" value="1"/>
</dbReference>
<dbReference type="SUPFAM" id="SSF48452">
    <property type="entry name" value="TPR-like"/>
    <property type="match status" value="1"/>
</dbReference>
<dbReference type="PROSITE" id="PS00170">
    <property type="entry name" value="CSA_PPIASE_1"/>
    <property type="match status" value="1"/>
</dbReference>
<dbReference type="PROSITE" id="PS50072">
    <property type="entry name" value="CSA_PPIASE_2"/>
    <property type="match status" value="1"/>
</dbReference>
<dbReference type="PROSITE" id="PS50005">
    <property type="entry name" value="TPR"/>
    <property type="match status" value="2"/>
</dbReference>
<dbReference type="PROSITE" id="PS50293">
    <property type="entry name" value="TPR_REGION"/>
    <property type="match status" value="1"/>
</dbReference>
<protein>
    <recommendedName>
        <fullName>41 kDa peptidyl-prolyl cis-trans isomerase</fullName>
        <shortName>PPIase</shortName>
        <ecNumber>5.2.1.8</ecNumber>
    </recommendedName>
    <alternativeName>
        <fullName>Cyclophilin-41</fullName>
        <shortName>CyP41</shortName>
    </alternativeName>
    <alternativeName>
        <fullName>Rotamase</fullName>
    </alternativeName>
</protein>
<organism>
    <name type="scientific">Neurospora crassa (strain ATCC 24698 / 74-OR23-1A / CBS 708.71 / DSM 1257 / FGSC 987)</name>
    <dbReference type="NCBI Taxonomy" id="367110"/>
    <lineage>
        <taxon>Eukaryota</taxon>
        <taxon>Fungi</taxon>
        <taxon>Dikarya</taxon>
        <taxon>Ascomycota</taxon>
        <taxon>Pezizomycotina</taxon>
        <taxon>Sordariomycetes</taxon>
        <taxon>Sordariomycetidae</taxon>
        <taxon>Sordariales</taxon>
        <taxon>Sordariaceae</taxon>
        <taxon>Neurospora</taxon>
    </lineage>
</organism>
<evidence type="ECO:0000250" key="1"/>
<evidence type="ECO:0000255" key="2">
    <source>
        <dbReference type="PROSITE-ProRule" id="PRU00156"/>
    </source>
</evidence>
<evidence type="ECO:0000269" key="3">
    <source>
    </source>
</evidence>
<evidence type="ECO:0000305" key="4"/>
<reference key="1">
    <citation type="journal article" date="2003" name="J. Mol. Biol.">
        <title>A novel binding protein for a member of CyP40-type Cyclophilins: N.crassa CyPBP37, a growth and thiamine regulated protein homolog to yeast Thi4p.</title>
        <authorList>
            <person name="Faou P."/>
            <person name="Tropschug M."/>
        </authorList>
    </citation>
    <scope>NUCLEOTIDE SEQUENCE [MRNA]</scope>
    <scope>INTERACTION WITH CYPBP37</scope>
    <source>
        <strain>74A</strain>
    </source>
</reference>
<reference key="2">
    <citation type="journal article" date="2003" name="Nature">
        <title>The genome sequence of the filamentous fungus Neurospora crassa.</title>
        <authorList>
            <person name="Galagan J.E."/>
            <person name="Calvo S.E."/>
            <person name="Borkovich K.A."/>
            <person name="Selker E.U."/>
            <person name="Read N.D."/>
            <person name="Jaffe D.B."/>
            <person name="FitzHugh W."/>
            <person name="Ma L.-J."/>
            <person name="Smirnov S."/>
            <person name="Purcell S."/>
            <person name="Rehman B."/>
            <person name="Elkins T."/>
            <person name="Engels R."/>
            <person name="Wang S."/>
            <person name="Nielsen C.B."/>
            <person name="Butler J."/>
            <person name="Endrizzi M."/>
            <person name="Qui D."/>
            <person name="Ianakiev P."/>
            <person name="Bell-Pedersen D."/>
            <person name="Nelson M.A."/>
            <person name="Werner-Washburne M."/>
            <person name="Selitrennikoff C.P."/>
            <person name="Kinsey J.A."/>
            <person name="Braun E.L."/>
            <person name="Zelter A."/>
            <person name="Schulte U."/>
            <person name="Kothe G.O."/>
            <person name="Jedd G."/>
            <person name="Mewes H.-W."/>
            <person name="Staben C."/>
            <person name="Marcotte E."/>
            <person name="Greenberg D."/>
            <person name="Roy A."/>
            <person name="Foley K."/>
            <person name="Naylor J."/>
            <person name="Stange-Thomann N."/>
            <person name="Barrett R."/>
            <person name="Gnerre S."/>
            <person name="Kamal M."/>
            <person name="Kamvysselis M."/>
            <person name="Mauceli E.W."/>
            <person name="Bielke C."/>
            <person name="Rudd S."/>
            <person name="Frishman D."/>
            <person name="Krystofova S."/>
            <person name="Rasmussen C."/>
            <person name="Metzenberg R.L."/>
            <person name="Perkins D.D."/>
            <person name="Kroken S."/>
            <person name="Cogoni C."/>
            <person name="Macino G."/>
            <person name="Catcheside D.E.A."/>
            <person name="Li W."/>
            <person name="Pratt R.J."/>
            <person name="Osmani S.A."/>
            <person name="DeSouza C.P.C."/>
            <person name="Glass N.L."/>
            <person name="Orbach M.J."/>
            <person name="Berglund J.A."/>
            <person name="Voelker R."/>
            <person name="Yarden O."/>
            <person name="Plamann M."/>
            <person name="Seiler S."/>
            <person name="Dunlap J.C."/>
            <person name="Radford A."/>
            <person name="Aramayo R."/>
            <person name="Natvig D.O."/>
            <person name="Alex L.A."/>
            <person name="Mannhaupt G."/>
            <person name="Ebbole D.J."/>
            <person name="Freitag M."/>
            <person name="Paulsen I."/>
            <person name="Sachs M.S."/>
            <person name="Lander E.S."/>
            <person name="Nusbaum C."/>
            <person name="Birren B.W."/>
        </authorList>
    </citation>
    <scope>NUCLEOTIDE SEQUENCE [LARGE SCALE GENOMIC DNA]</scope>
    <source>
        <strain>ATCC 24698 / 74-OR23-1A / CBS 708.71 / DSM 1257 / FGSC 987</strain>
    </source>
</reference>
<comment type="function">
    <text>PPIases accelerate the folding of proteins. It catalyzes the cis-trans isomerization of proline imidic peptide bonds in oligopeptides.</text>
</comment>
<comment type="catalytic activity">
    <reaction>
        <text>[protein]-peptidylproline (omega=180) = [protein]-peptidylproline (omega=0)</text>
        <dbReference type="Rhea" id="RHEA:16237"/>
        <dbReference type="Rhea" id="RHEA-COMP:10747"/>
        <dbReference type="Rhea" id="RHEA-COMP:10748"/>
        <dbReference type="ChEBI" id="CHEBI:83833"/>
        <dbReference type="ChEBI" id="CHEBI:83834"/>
        <dbReference type="EC" id="5.2.1.8"/>
    </reaction>
</comment>
<comment type="subunit">
    <text evidence="3">Interacts with CyPBP37.</text>
</comment>
<comment type="subcellular location">
    <subcellularLocation>
        <location evidence="1">Cytoplasm</location>
    </subcellularLocation>
</comment>
<comment type="similarity">
    <text evidence="4">Belongs to the cyclophilin-type PPIase family. PPIase D subfamily.</text>
</comment>
<proteinExistence type="evidence at protein level"/>
<sequence>MSSTDDVKQARSRVFFDITIGGKAAGRIVFELYNDIVPKTAENFRALCTGEKGVGKLGKPLHYKGSTFHRVIKQFMIQGGDFTAGNGTGGESIYGAKFEDENFQLKHDRPFLLSMANAGPGTNGSQFFVTTVPTPHLDGKHVVFGEVLSGKSVVRQIENLKTQGDKPTKDAVIADCGELSGDAAVSADTKTADAYGDEYEDFPEDEATDGQPLSASKILKIATDCKDFGNKAFKAGDLPVALDKYQKGLRYLNEDPELDNEPADTKQKLDALRVSLNSNAALMNMKLSAWDECIRSADGALAVATISDKDRAKALYRRGYAQVRIKDEDSALTSLEEAKKLAPEDGAIVNELAAVKKAAAARMAKEKAAYKKFFS</sequence>
<keyword id="KW-0963">Cytoplasm</keyword>
<keyword id="KW-0413">Isomerase</keyword>
<keyword id="KW-1185">Reference proteome</keyword>
<keyword id="KW-0677">Repeat</keyword>
<keyword id="KW-0697">Rotamase</keyword>
<keyword id="KW-0802">TPR repeat</keyword>
<feature type="chain" id="PRO_0000064156" description="41 kDa peptidyl-prolyl cis-trans isomerase">
    <location>
        <begin position="1"/>
        <end position="375"/>
    </location>
</feature>
<feature type="domain" description="PPIase cyclophilin-type" evidence="2">
    <location>
        <begin position="15"/>
        <end position="178"/>
    </location>
</feature>
<feature type="repeat" description="TPR 1">
    <location>
        <begin position="222"/>
        <end position="255"/>
    </location>
</feature>
<feature type="repeat" description="TPR 2">
    <location>
        <begin position="274"/>
        <end position="307"/>
    </location>
</feature>
<feature type="repeat" description="TPR 3">
    <location>
        <begin position="312"/>
        <end position="345"/>
    </location>
</feature>